<sequence length="248" mass="27234">MARKFFVGGNFKMNGTRKDLKAIVDNLNNAQLDPNAEVVIAPPALYLDFVKQNLQKPNVEVAAQNVFNKPNGAFTGEISATQLLDLGVKWVILGHSERRNELGESDEFIASKTKYALDNGISVIWCCGESKDTRQAGETIKFVENQLAALAKEINDWKNVVIAYEPIWAIGTGLVATKEQAQEVHAAIRSWLKQNVSDKVAEETRILYGGSVNAKNCKDLAKEQDIDGFLVGGASLKPEFVDIINANL</sequence>
<feature type="chain" id="PRO_0000090165" description="Triosephosphate isomerase">
    <location>
        <begin position="1"/>
        <end position="248"/>
    </location>
</feature>
<feature type="active site" description="Electrophile" evidence="1">
    <location>
        <position position="95"/>
    </location>
</feature>
<feature type="active site" description="Proton acceptor" evidence="1">
    <location>
        <position position="165"/>
    </location>
</feature>
<feature type="binding site" evidence="1">
    <location>
        <position position="10"/>
    </location>
    <ligand>
        <name>substrate</name>
    </ligand>
</feature>
<feature type="binding site" evidence="1">
    <location>
        <position position="12"/>
    </location>
    <ligand>
        <name>substrate</name>
    </ligand>
</feature>
<organism>
    <name type="scientific">Neurospora crassa (strain ATCC 24698 / 74-OR23-1A / CBS 708.71 / DSM 1257 / FGSC 987)</name>
    <dbReference type="NCBI Taxonomy" id="367110"/>
    <lineage>
        <taxon>Eukaryota</taxon>
        <taxon>Fungi</taxon>
        <taxon>Dikarya</taxon>
        <taxon>Ascomycota</taxon>
        <taxon>Pezizomycotina</taxon>
        <taxon>Sordariomycetes</taxon>
        <taxon>Sordariomycetidae</taxon>
        <taxon>Sordariales</taxon>
        <taxon>Sordariaceae</taxon>
        <taxon>Neurospora</taxon>
    </lineage>
</organism>
<accession>Q7S2Z9</accession>
<reference key="1">
    <citation type="journal article" date="2003" name="Nature">
        <title>The genome sequence of the filamentous fungus Neurospora crassa.</title>
        <authorList>
            <person name="Galagan J.E."/>
            <person name="Calvo S.E."/>
            <person name="Borkovich K.A."/>
            <person name="Selker E.U."/>
            <person name="Read N.D."/>
            <person name="Jaffe D.B."/>
            <person name="FitzHugh W."/>
            <person name="Ma L.-J."/>
            <person name="Smirnov S."/>
            <person name="Purcell S."/>
            <person name="Rehman B."/>
            <person name="Elkins T."/>
            <person name="Engels R."/>
            <person name="Wang S."/>
            <person name="Nielsen C.B."/>
            <person name="Butler J."/>
            <person name="Endrizzi M."/>
            <person name="Qui D."/>
            <person name="Ianakiev P."/>
            <person name="Bell-Pedersen D."/>
            <person name="Nelson M.A."/>
            <person name="Werner-Washburne M."/>
            <person name="Selitrennikoff C.P."/>
            <person name="Kinsey J.A."/>
            <person name="Braun E.L."/>
            <person name="Zelter A."/>
            <person name="Schulte U."/>
            <person name="Kothe G.O."/>
            <person name="Jedd G."/>
            <person name="Mewes H.-W."/>
            <person name="Staben C."/>
            <person name="Marcotte E."/>
            <person name="Greenberg D."/>
            <person name="Roy A."/>
            <person name="Foley K."/>
            <person name="Naylor J."/>
            <person name="Stange-Thomann N."/>
            <person name="Barrett R."/>
            <person name="Gnerre S."/>
            <person name="Kamal M."/>
            <person name="Kamvysselis M."/>
            <person name="Mauceli E.W."/>
            <person name="Bielke C."/>
            <person name="Rudd S."/>
            <person name="Frishman D."/>
            <person name="Krystofova S."/>
            <person name="Rasmussen C."/>
            <person name="Metzenberg R.L."/>
            <person name="Perkins D.D."/>
            <person name="Kroken S."/>
            <person name="Cogoni C."/>
            <person name="Macino G."/>
            <person name="Catcheside D.E.A."/>
            <person name="Li W."/>
            <person name="Pratt R.J."/>
            <person name="Osmani S.A."/>
            <person name="DeSouza C.P.C."/>
            <person name="Glass N.L."/>
            <person name="Orbach M.J."/>
            <person name="Berglund J.A."/>
            <person name="Voelker R."/>
            <person name="Yarden O."/>
            <person name="Plamann M."/>
            <person name="Seiler S."/>
            <person name="Dunlap J.C."/>
            <person name="Radford A."/>
            <person name="Aramayo R."/>
            <person name="Natvig D.O."/>
            <person name="Alex L.A."/>
            <person name="Mannhaupt G."/>
            <person name="Ebbole D.J."/>
            <person name="Freitag M."/>
            <person name="Paulsen I."/>
            <person name="Sachs M.S."/>
            <person name="Lander E.S."/>
            <person name="Nusbaum C."/>
            <person name="Birren B.W."/>
        </authorList>
    </citation>
    <scope>NUCLEOTIDE SEQUENCE [LARGE SCALE GENOMIC DNA]</scope>
    <source>
        <strain>ATCC 24698 / 74-OR23-1A / CBS 708.71 / DSM 1257 / FGSC 987</strain>
    </source>
</reference>
<dbReference type="EC" id="5.3.1.1"/>
<dbReference type="EMBL" id="CM002238">
    <property type="protein sequence ID" value="EAA29827.1"/>
    <property type="molecule type" value="Genomic_DNA"/>
</dbReference>
<dbReference type="RefSeq" id="XP_959063.1">
    <property type="nucleotide sequence ID" value="XM_953970.3"/>
</dbReference>
<dbReference type="SMR" id="Q7S2Z9"/>
<dbReference type="FunCoup" id="Q7S2Z9">
    <property type="interactions" value="664"/>
</dbReference>
<dbReference type="STRING" id="367110.Q7S2Z9"/>
<dbReference type="PaxDb" id="5141-EFNCRP00000007877"/>
<dbReference type="EnsemblFungi" id="EAA29827">
    <property type="protein sequence ID" value="EAA29827"/>
    <property type="gene ID" value="NCU07550"/>
</dbReference>
<dbReference type="GeneID" id="3875201"/>
<dbReference type="KEGG" id="ncr:NCU07550"/>
<dbReference type="VEuPathDB" id="FungiDB:NCU07550"/>
<dbReference type="HOGENOM" id="CLU_024251_2_0_1"/>
<dbReference type="InParanoid" id="Q7S2Z9"/>
<dbReference type="OMA" id="NWKMHMT"/>
<dbReference type="OrthoDB" id="6715177at2759"/>
<dbReference type="UniPathway" id="UPA00109">
    <property type="reaction ID" value="UER00189"/>
</dbReference>
<dbReference type="UniPathway" id="UPA00138"/>
<dbReference type="Proteomes" id="UP000001805">
    <property type="component" value="Chromosome 3, Linkage Group III"/>
</dbReference>
<dbReference type="GO" id="GO:0005829">
    <property type="term" value="C:cytosol"/>
    <property type="evidence" value="ECO:0000318"/>
    <property type="project" value="GO_Central"/>
</dbReference>
<dbReference type="GO" id="GO:0004807">
    <property type="term" value="F:triose-phosphate isomerase activity"/>
    <property type="evidence" value="ECO:0000318"/>
    <property type="project" value="GO_Central"/>
</dbReference>
<dbReference type="GO" id="GO:0006094">
    <property type="term" value="P:gluconeogenesis"/>
    <property type="evidence" value="ECO:0000318"/>
    <property type="project" value="GO_Central"/>
</dbReference>
<dbReference type="GO" id="GO:0046166">
    <property type="term" value="P:glyceraldehyde-3-phosphate biosynthetic process"/>
    <property type="evidence" value="ECO:0000318"/>
    <property type="project" value="GO_Central"/>
</dbReference>
<dbReference type="GO" id="GO:0019563">
    <property type="term" value="P:glycerol catabolic process"/>
    <property type="evidence" value="ECO:0000318"/>
    <property type="project" value="GO_Central"/>
</dbReference>
<dbReference type="GO" id="GO:0006096">
    <property type="term" value="P:glycolytic process"/>
    <property type="evidence" value="ECO:0000318"/>
    <property type="project" value="GO_Central"/>
</dbReference>
<dbReference type="CDD" id="cd00311">
    <property type="entry name" value="TIM"/>
    <property type="match status" value="1"/>
</dbReference>
<dbReference type="FunFam" id="3.20.20.70:FF:000025">
    <property type="entry name" value="Triosephosphate isomerase"/>
    <property type="match status" value="1"/>
</dbReference>
<dbReference type="Gene3D" id="3.20.20.70">
    <property type="entry name" value="Aldolase class I"/>
    <property type="match status" value="1"/>
</dbReference>
<dbReference type="HAMAP" id="MF_00147_B">
    <property type="entry name" value="TIM_B"/>
    <property type="match status" value="1"/>
</dbReference>
<dbReference type="InterPro" id="IPR013785">
    <property type="entry name" value="Aldolase_TIM"/>
</dbReference>
<dbReference type="InterPro" id="IPR035990">
    <property type="entry name" value="TIM_sf"/>
</dbReference>
<dbReference type="InterPro" id="IPR022896">
    <property type="entry name" value="TrioseP_Isoase_bac/euk"/>
</dbReference>
<dbReference type="InterPro" id="IPR000652">
    <property type="entry name" value="Triosephosphate_isomerase"/>
</dbReference>
<dbReference type="InterPro" id="IPR020861">
    <property type="entry name" value="Triosephosphate_isomerase_AS"/>
</dbReference>
<dbReference type="NCBIfam" id="TIGR00419">
    <property type="entry name" value="tim"/>
    <property type="match status" value="1"/>
</dbReference>
<dbReference type="PANTHER" id="PTHR21139">
    <property type="entry name" value="TRIOSEPHOSPHATE ISOMERASE"/>
    <property type="match status" value="1"/>
</dbReference>
<dbReference type="PANTHER" id="PTHR21139:SF41">
    <property type="entry name" value="TRIOSEPHOSPHATE ISOMERASE"/>
    <property type="match status" value="1"/>
</dbReference>
<dbReference type="Pfam" id="PF00121">
    <property type="entry name" value="TIM"/>
    <property type="match status" value="1"/>
</dbReference>
<dbReference type="SUPFAM" id="SSF51351">
    <property type="entry name" value="Triosephosphate isomerase (TIM)"/>
    <property type="match status" value="1"/>
</dbReference>
<dbReference type="PROSITE" id="PS00171">
    <property type="entry name" value="TIM_1"/>
    <property type="match status" value="1"/>
</dbReference>
<dbReference type="PROSITE" id="PS51440">
    <property type="entry name" value="TIM_2"/>
    <property type="match status" value="1"/>
</dbReference>
<evidence type="ECO:0000250" key="1"/>
<evidence type="ECO:0000305" key="2"/>
<protein>
    <recommendedName>
        <fullName>Triosephosphate isomerase</fullName>
        <shortName>TIM</shortName>
        <ecNumber>5.3.1.1</ecNumber>
    </recommendedName>
    <alternativeName>
        <fullName>Triose-phosphate isomerase</fullName>
    </alternativeName>
</protein>
<gene>
    <name type="primary">tpi-1</name>
    <name type="ORF">NCU07550</name>
</gene>
<proteinExistence type="inferred from homology"/>
<name>TPIS_NEUCR</name>
<keyword id="KW-0312">Gluconeogenesis</keyword>
<keyword id="KW-0324">Glycolysis</keyword>
<keyword id="KW-0413">Isomerase</keyword>
<keyword id="KW-1185">Reference proteome</keyword>
<comment type="catalytic activity">
    <reaction>
        <text>D-glyceraldehyde 3-phosphate = dihydroxyacetone phosphate</text>
        <dbReference type="Rhea" id="RHEA:18585"/>
        <dbReference type="ChEBI" id="CHEBI:57642"/>
        <dbReference type="ChEBI" id="CHEBI:59776"/>
        <dbReference type="EC" id="5.3.1.1"/>
    </reaction>
</comment>
<comment type="pathway">
    <text>Carbohydrate biosynthesis; gluconeogenesis.</text>
</comment>
<comment type="pathway">
    <text>Carbohydrate degradation; glycolysis; D-glyceraldehyde 3-phosphate from glycerone phosphate: step 1/1.</text>
</comment>
<comment type="subunit">
    <text evidence="1">Homodimer.</text>
</comment>
<comment type="similarity">
    <text evidence="2">Belongs to the triosephosphate isomerase family.</text>
</comment>